<comment type="function">
    <text>Putative regulatory subunit of protein phosphatase 6 (PP6) that may be involved in the recognition of phosphoprotein substrates.</text>
</comment>
<comment type="subunit">
    <text evidence="3">Protein phosphatase 6 (PP6) holoenzyme is proposed to be a heterotrimeric complex formed by the catalytic subunit, a SAPS domain-containing subunit (PP6R) and an ankyrin repeat-domain containing regulatory subunit (ARS). Interacts with PPP6R1.</text>
</comment>
<comment type="interaction">
    <interactant intactId="EBI-1996119">
        <id>Q8NB46</id>
    </interactant>
    <interactant intactId="EBI-359745">
        <id>Q9UPN7</id>
        <label>PPP6R1</label>
    </interactant>
    <organismsDiffer>false</organismsDiffer>
    <experiments>6</experiments>
</comment>
<evidence type="ECO:0000250" key="1">
    <source>
        <dbReference type="UniProtKB" id="Q8BTI7"/>
    </source>
</evidence>
<evidence type="ECO:0000256" key="2">
    <source>
        <dbReference type="SAM" id="MobiDB-lite"/>
    </source>
</evidence>
<evidence type="ECO:0000269" key="3">
    <source>
    </source>
</evidence>
<evidence type="ECO:0000305" key="4"/>
<evidence type="ECO:0007744" key="5">
    <source>
    </source>
</evidence>
<evidence type="ECO:0007744" key="6">
    <source>
    </source>
</evidence>
<evidence type="ECO:0007744" key="7">
    <source>
    </source>
</evidence>
<sequence>MGILSITDQPPLVQAIFSRDVEEVRSLLSQKENINVLDQERRTPLHAAAYVGDVPILQLLLMSGANVNAKDTLWLTPLHRAAASRNEKVLGLLLAHSADVNARDKLWQTPLHVAAANRATKCAEALAPLLSSLNVADRSGRSALHHAVHSGHLETVNLLLNKGASLNVCDKKERQPLHWAAFLGHLEVLKLLVARGADLGCKDRKGYGLLHTAAASGQIEVVKYLLRMGAEIDEPNAFGNTALHIACYLGQDAVAIELVNAGANVNQPNDKGFTPLHVAAVSTNGALCLELLVNNGADVNYQSKEGKSPLHMAAIHGRFTRSQILIQNGSEIDCADKFGNTPLHVAARYGHELLISTLMTNGADTARRGIHDMFPLHLAVLFGFSDCCRKLLSSGQLYSIVSSLSNEHVLSAGFDINTPDNLGRTCLHAAASGGNVECLNLLLSSGADLRRRDKFGRTPLHYAAANGSYQCAVTLVTAGAGVNEADCKGCSPLHYAAASDTYRRAEPHTPSSHDAEEDEPLKESRRKEAFFCLEFLLDNGADPSLRDRQGYTAVHYAAAYGNRQNLELLLEMSFNCLEDVESTIPVSPLHLAAYNGHCEALKTLAETLVNLDVRDHKGRTALFLATERGSTECVEVLTAHGASALIKERKRKWTPLHAAAASGHTDSLHLLIDSGERADITDVMDAYGQTPLMLAIMNGHVDCVHLLLEKGSTADAADLRGRTALHRGAVTGCEDCLAALLDHDAFVLCRDFKGRTPIHLASACGHTAVLRTLLQAALSTDPLDAGVDYSGYSPMHWASYTGHEDCLELLLEHSPFSYLEGNPFTPLHCAVINNQDSTTEMLLGALGAKIVNSRDAKGRTPLHAAAFADNVSGLRMLLQHQAEVNATDHTGRTALMTAAENGQTAAVEFLLYRGKADLTVLDENKNTALHLACSKGHEKCALMILAETQDLGLINATNSALQMPLHIAARNGLASVVQALLSHGATVLAVDEEGHTPALACAPNKDVADCLALILSTMKPFPPKDAVSPFSFSLLKNCSIAAAKTVGGCGALPHGASCPYSQERPGAIGLDGCYSE</sequence>
<feature type="chain" id="PRO_0000244587" description="Serine/threonine-protein phosphatase 6 regulatory ankyrin repeat subunit C">
    <location>
        <begin position="1"/>
        <end position="1076"/>
    </location>
</feature>
<feature type="repeat" description="ANK 1">
    <location>
        <begin position="7"/>
        <end position="36"/>
    </location>
</feature>
<feature type="repeat" description="ANK 2">
    <location>
        <begin position="40"/>
        <end position="69"/>
    </location>
</feature>
<feature type="repeat" description="ANK 3">
    <location>
        <begin position="73"/>
        <end position="102"/>
    </location>
</feature>
<feature type="repeat" description="ANK 4">
    <location>
        <begin position="106"/>
        <end position="135"/>
    </location>
</feature>
<feature type="repeat" description="ANK 5">
    <location>
        <begin position="139"/>
        <end position="168"/>
    </location>
</feature>
<feature type="repeat" description="ANK 6">
    <location>
        <begin position="172"/>
        <end position="201"/>
    </location>
</feature>
<feature type="repeat" description="ANK 7">
    <location>
        <begin position="205"/>
        <end position="234"/>
    </location>
</feature>
<feature type="repeat" description="ANK 8">
    <location>
        <begin position="238"/>
        <end position="267"/>
    </location>
</feature>
<feature type="repeat" description="ANK 9">
    <location>
        <begin position="271"/>
        <end position="301"/>
    </location>
</feature>
<feature type="repeat" description="ANK 10">
    <location>
        <begin position="305"/>
        <end position="334"/>
    </location>
</feature>
<feature type="repeat" description="ANK 11">
    <location>
        <begin position="338"/>
        <end position="367"/>
    </location>
</feature>
<feature type="repeat" description="ANK 12">
    <location>
        <begin position="371"/>
        <end position="400"/>
    </location>
</feature>
<feature type="repeat" description="ANK 13">
    <location>
        <begin position="422"/>
        <end position="451"/>
    </location>
</feature>
<feature type="repeat" description="ANK 14">
    <location>
        <begin position="455"/>
        <end position="484"/>
    </location>
</feature>
<feature type="repeat" description="ANK 15">
    <location>
        <begin position="488"/>
        <end position="545"/>
    </location>
</feature>
<feature type="repeat" description="ANK 16">
    <location>
        <begin position="549"/>
        <end position="579"/>
    </location>
</feature>
<feature type="repeat" description="ANK 17">
    <location>
        <begin position="584"/>
        <end position="613"/>
    </location>
</feature>
<feature type="repeat" description="ANK 18">
    <location>
        <begin position="617"/>
        <end position="646"/>
    </location>
</feature>
<feature type="repeat" description="ANK 19">
    <location>
        <begin position="651"/>
        <end position="680"/>
    </location>
</feature>
<feature type="repeat" description="ANK 20">
    <location>
        <begin position="687"/>
        <end position="716"/>
    </location>
</feature>
<feature type="repeat" description="ANK 21">
    <location>
        <begin position="720"/>
        <end position="749"/>
    </location>
</feature>
<feature type="repeat" description="ANK 22">
    <location>
        <begin position="753"/>
        <end position="782"/>
    </location>
</feature>
<feature type="repeat" description="ANK 23">
    <location>
        <begin position="790"/>
        <end position="819"/>
    </location>
</feature>
<feature type="repeat" description="ANK 24">
    <location>
        <begin position="822"/>
        <end position="852"/>
    </location>
</feature>
<feature type="repeat" description="ANK 25">
    <location>
        <begin position="857"/>
        <end position="886"/>
    </location>
</feature>
<feature type="repeat" description="ANK 26">
    <location>
        <begin position="890"/>
        <end position="920"/>
    </location>
</feature>
<feature type="repeat" description="ANK 27">
    <location>
        <begin position="924"/>
        <end position="953"/>
    </location>
</feature>
<feature type="repeat" description="ANK 28">
    <location>
        <begin position="960"/>
        <end position="989"/>
    </location>
</feature>
<feature type="region of interest" description="Disordered" evidence="2">
    <location>
        <begin position="502"/>
        <end position="522"/>
    </location>
</feature>
<feature type="compositionally biased region" description="Basic and acidic residues" evidence="2">
    <location>
        <begin position="502"/>
        <end position="514"/>
    </location>
</feature>
<feature type="modified residue" description="Phosphoserine" evidence="5 6 7">
    <location>
        <position position="1028"/>
    </location>
</feature>
<feature type="modified residue" description="Phosphoserine" evidence="1">
    <location>
        <position position="1075"/>
    </location>
</feature>
<feature type="sequence conflict" description="In Ref. 4; AK091555." evidence="4" ref="4">
    <original>A</original>
    <variation>V</variation>
    <location>
        <position position="686"/>
    </location>
</feature>
<feature type="sequence conflict" description="In Ref. 4; AK091555." evidence="4" ref="4">
    <original>A</original>
    <variation>T</variation>
    <location>
        <position position="856"/>
    </location>
</feature>
<proteinExistence type="evidence at protein level"/>
<accession>Q8NB46</accession>
<accession>A6NE79</accession>
<accession>B1Q2K2</accession>
<name>ANR52_HUMAN</name>
<protein>
    <recommendedName>
        <fullName>Serine/threonine-protein phosphatase 6 regulatory ankyrin repeat subunit C</fullName>
        <shortName>PP6-ARS-C</shortName>
        <shortName>Serine/threonine-protein phosphatase 6 regulatory subunit ARS-C</shortName>
    </recommendedName>
    <alternativeName>
        <fullName>Ankyrin repeat domain-containing protein 52</fullName>
    </alternativeName>
</protein>
<keyword id="KW-0040">ANK repeat</keyword>
<keyword id="KW-0597">Phosphoprotein</keyword>
<keyword id="KW-1267">Proteomics identification</keyword>
<keyword id="KW-1185">Reference proteome</keyword>
<keyword id="KW-0677">Repeat</keyword>
<reference key="1">
    <citation type="submission" date="2004-09" db="EMBL/GenBank/DDBJ databases">
        <title>Identification of up-regulated genes in gastric cancer.</title>
        <authorList>
            <person name="Jinawath N."/>
            <person name="Furukawa Y."/>
            <person name="Nakamura Y."/>
        </authorList>
    </citation>
    <scope>NUCLEOTIDE SEQUENCE [MRNA]</scope>
</reference>
<reference key="2">
    <citation type="journal article" date="2006" name="Nature">
        <title>The finished DNA sequence of human chromosome 12.</title>
        <authorList>
            <person name="Scherer S.E."/>
            <person name="Muzny D.M."/>
            <person name="Buhay C.J."/>
            <person name="Chen R."/>
            <person name="Cree A."/>
            <person name="Ding Y."/>
            <person name="Dugan-Rocha S."/>
            <person name="Gill R."/>
            <person name="Gunaratne P."/>
            <person name="Harris R.A."/>
            <person name="Hawes A.C."/>
            <person name="Hernandez J."/>
            <person name="Hodgson A.V."/>
            <person name="Hume J."/>
            <person name="Jackson A."/>
            <person name="Khan Z.M."/>
            <person name="Kovar-Smith C."/>
            <person name="Lewis L.R."/>
            <person name="Lozado R.J."/>
            <person name="Metzker M.L."/>
            <person name="Milosavljevic A."/>
            <person name="Miner G.R."/>
            <person name="Montgomery K.T."/>
            <person name="Morgan M.B."/>
            <person name="Nazareth L.V."/>
            <person name="Scott G."/>
            <person name="Sodergren E."/>
            <person name="Song X.-Z."/>
            <person name="Steffen D."/>
            <person name="Lovering R.C."/>
            <person name="Wheeler D.A."/>
            <person name="Worley K.C."/>
            <person name="Yuan Y."/>
            <person name="Zhang Z."/>
            <person name="Adams C.Q."/>
            <person name="Ansari-Lari M.A."/>
            <person name="Ayele M."/>
            <person name="Brown M.J."/>
            <person name="Chen G."/>
            <person name="Chen Z."/>
            <person name="Clerc-Blankenburg K.P."/>
            <person name="Davis C."/>
            <person name="Delgado O."/>
            <person name="Dinh H.H."/>
            <person name="Draper H."/>
            <person name="Gonzalez-Garay M.L."/>
            <person name="Havlak P."/>
            <person name="Jackson L.R."/>
            <person name="Jacob L.S."/>
            <person name="Kelly S.H."/>
            <person name="Li L."/>
            <person name="Li Z."/>
            <person name="Liu J."/>
            <person name="Liu W."/>
            <person name="Lu J."/>
            <person name="Maheshwari M."/>
            <person name="Nguyen B.-V."/>
            <person name="Okwuonu G.O."/>
            <person name="Pasternak S."/>
            <person name="Perez L.M."/>
            <person name="Plopper F.J.H."/>
            <person name="Santibanez J."/>
            <person name="Shen H."/>
            <person name="Tabor P.E."/>
            <person name="Verduzco D."/>
            <person name="Waldron L."/>
            <person name="Wang Q."/>
            <person name="Williams G.A."/>
            <person name="Zhang J."/>
            <person name="Zhou J."/>
            <person name="Allen C.C."/>
            <person name="Amin A.G."/>
            <person name="Anyalebechi V."/>
            <person name="Bailey M."/>
            <person name="Barbaria J.A."/>
            <person name="Bimage K.E."/>
            <person name="Bryant N.P."/>
            <person name="Burch P.E."/>
            <person name="Burkett C.E."/>
            <person name="Burrell K.L."/>
            <person name="Calderon E."/>
            <person name="Cardenas V."/>
            <person name="Carter K."/>
            <person name="Casias K."/>
            <person name="Cavazos I."/>
            <person name="Cavazos S.R."/>
            <person name="Ceasar H."/>
            <person name="Chacko J."/>
            <person name="Chan S.N."/>
            <person name="Chavez D."/>
            <person name="Christopoulos C."/>
            <person name="Chu J."/>
            <person name="Cockrell R."/>
            <person name="Cox C.D."/>
            <person name="Dang M."/>
            <person name="Dathorne S.R."/>
            <person name="David R."/>
            <person name="Davis C.M."/>
            <person name="Davy-Carroll L."/>
            <person name="Deshazo D.R."/>
            <person name="Donlin J.E."/>
            <person name="D'Souza L."/>
            <person name="Eaves K.A."/>
            <person name="Egan A."/>
            <person name="Emery-Cohen A.J."/>
            <person name="Escotto M."/>
            <person name="Flagg N."/>
            <person name="Forbes L.D."/>
            <person name="Gabisi A.M."/>
            <person name="Garza M."/>
            <person name="Hamilton C."/>
            <person name="Henderson N."/>
            <person name="Hernandez O."/>
            <person name="Hines S."/>
            <person name="Hogues M.E."/>
            <person name="Huang M."/>
            <person name="Idlebird D.G."/>
            <person name="Johnson R."/>
            <person name="Jolivet A."/>
            <person name="Jones S."/>
            <person name="Kagan R."/>
            <person name="King L.M."/>
            <person name="Leal B."/>
            <person name="Lebow H."/>
            <person name="Lee S."/>
            <person name="LeVan J.M."/>
            <person name="Lewis L.C."/>
            <person name="London P."/>
            <person name="Lorensuhewa L.M."/>
            <person name="Loulseged H."/>
            <person name="Lovett D.A."/>
            <person name="Lucier A."/>
            <person name="Lucier R.L."/>
            <person name="Ma J."/>
            <person name="Madu R.C."/>
            <person name="Mapua P."/>
            <person name="Martindale A.D."/>
            <person name="Martinez E."/>
            <person name="Massey E."/>
            <person name="Mawhiney S."/>
            <person name="Meador M.G."/>
            <person name="Mendez S."/>
            <person name="Mercado C."/>
            <person name="Mercado I.C."/>
            <person name="Merritt C.E."/>
            <person name="Miner Z.L."/>
            <person name="Minja E."/>
            <person name="Mitchell T."/>
            <person name="Mohabbat F."/>
            <person name="Mohabbat K."/>
            <person name="Montgomery B."/>
            <person name="Moore N."/>
            <person name="Morris S."/>
            <person name="Munidasa M."/>
            <person name="Ngo R.N."/>
            <person name="Nguyen N.B."/>
            <person name="Nickerson E."/>
            <person name="Nwaokelemeh O.O."/>
            <person name="Nwokenkwo S."/>
            <person name="Obregon M."/>
            <person name="Oguh M."/>
            <person name="Oragunye N."/>
            <person name="Oviedo R.J."/>
            <person name="Parish B.J."/>
            <person name="Parker D.N."/>
            <person name="Parrish J."/>
            <person name="Parks K.L."/>
            <person name="Paul H.A."/>
            <person name="Payton B.A."/>
            <person name="Perez A."/>
            <person name="Perrin W."/>
            <person name="Pickens A."/>
            <person name="Primus E.L."/>
            <person name="Pu L.-L."/>
            <person name="Puazo M."/>
            <person name="Quiles M.M."/>
            <person name="Quiroz J.B."/>
            <person name="Rabata D."/>
            <person name="Reeves K."/>
            <person name="Ruiz S.J."/>
            <person name="Shao H."/>
            <person name="Sisson I."/>
            <person name="Sonaike T."/>
            <person name="Sorelle R.P."/>
            <person name="Sutton A.E."/>
            <person name="Svatek A.F."/>
            <person name="Svetz L.A."/>
            <person name="Tamerisa K.S."/>
            <person name="Taylor T.R."/>
            <person name="Teague B."/>
            <person name="Thomas N."/>
            <person name="Thorn R.D."/>
            <person name="Trejos Z.Y."/>
            <person name="Trevino B.K."/>
            <person name="Ukegbu O.N."/>
            <person name="Urban J.B."/>
            <person name="Vasquez L.I."/>
            <person name="Vera V.A."/>
            <person name="Villasana D.M."/>
            <person name="Wang L."/>
            <person name="Ward-Moore S."/>
            <person name="Warren J.T."/>
            <person name="Wei X."/>
            <person name="White F."/>
            <person name="Williamson A.L."/>
            <person name="Wleczyk R."/>
            <person name="Wooden H.S."/>
            <person name="Wooden S.H."/>
            <person name="Yen J."/>
            <person name="Yoon L."/>
            <person name="Yoon V."/>
            <person name="Zorrilla S.E."/>
            <person name="Nelson D."/>
            <person name="Kucherlapati R."/>
            <person name="Weinstock G."/>
            <person name="Gibbs R.A."/>
        </authorList>
    </citation>
    <scope>NUCLEOTIDE SEQUENCE [LARGE SCALE GENOMIC DNA]</scope>
</reference>
<reference key="3">
    <citation type="submission" date="2005-07" db="EMBL/GenBank/DDBJ databases">
        <authorList>
            <person name="Mural R.J."/>
            <person name="Istrail S."/>
            <person name="Sutton G.G."/>
            <person name="Florea L."/>
            <person name="Halpern A.L."/>
            <person name="Mobarry C.M."/>
            <person name="Lippert R."/>
            <person name="Walenz B."/>
            <person name="Shatkay H."/>
            <person name="Dew I."/>
            <person name="Miller J.R."/>
            <person name="Flanigan M.J."/>
            <person name="Edwards N.J."/>
            <person name="Bolanos R."/>
            <person name="Fasulo D."/>
            <person name="Halldorsson B.V."/>
            <person name="Hannenhalli S."/>
            <person name="Turner R."/>
            <person name="Yooseph S."/>
            <person name="Lu F."/>
            <person name="Nusskern D.R."/>
            <person name="Shue B.C."/>
            <person name="Zheng X.H."/>
            <person name="Zhong F."/>
            <person name="Delcher A.L."/>
            <person name="Huson D.H."/>
            <person name="Kravitz S.A."/>
            <person name="Mouchard L."/>
            <person name="Reinert K."/>
            <person name="Remington K.A."/>
            <person name="Clark A.G."/>
            <person name="Waterman M.S."/>
            <person name="Eichler E.E."/>
            <person name="Adams M.D."/>
            <person name="Hunkapiller M.W."/>
            <person name="Myers E.W."/>
            <person name="Venter J.C."/>
        </authorList>
    </citation>
    <scope>NUCLEOTIDE SEQUENCE [LARGE SCALE GENOMIC DNA]</scope>
</reference>
<reference key="4">
    <citation type="journal article" date="2004" name="Nat. Genet.">
        <title>Complete sequencing and characterization of 21,243 full-length human cDNAs.</title>
        <authorList>
            <person name="Ota T."/>
            <person name="Suzuki Y."/>
            <person name="Nishikawa T."/>
            <person name="Otsuki T."/>
            <person name="Sugiyama T."/>
            <person name="Irie R."/>
            <person name="Wakamatsu A."/>
            <person name="Hayashi K."/>
            <person name="Sato H."/>
            <person name="Nagai K."/>
            <person name="Kimura K."/>
            <person name="Makita H."/>
            <person name="Sekine M."/>
            <person name="Obayashi M."/>
            <person name="Nishi T."/>
            <person name="Shibahara T."/>
            <person name="Tanaka T."/>
            <person name="Ishii S."/>
            <person name="Yamamoto J."/>
            <person name="Saito K."/>
            <person name="Kawai Y."/>
            <person name="Isono Y."/>
            <person name="Nakamura Y."/>
            <person name="Nagahari K."/>
            <person name="Murakami K."/>
            <person name="Yasuda T."/>
            <person name="Iwayanagi T."/>
            <person name="Wagatsuma M."/>
            <person name="Shiratori A."/>
            <person name="Sudo H."/>
            <person name="Hosoiri T."/>
            <person name="Kaku Y."/>
            <person name="Kodaira H."/>
            <person name="Kondo H."/>
            <person name="Sugawara M."/>
            <person name="Takahashi M."/>
            <person name="Kanda K."/>
            <person name="Yokoi T."/>
            <person name="Furuya T."/>
            <person name="Kikkawa E."/>
            <person name="Omura Y."/>
            <person name="Abe K."/>
            <person name="Kamihara K."/>
            <person name="Katsuta N."/>
            <person name="Sato K."/>
            <person name="Tanikawa M."/>
            <person name="Yamazaki M."/>
            <person name="Ninomiya K."/>
            <person name="Ishibashi T."/>
            <person name="Yamashita H."/>
            <person name="Murakawa K."/>
            <person name="Fujimori K."/>
            <person name="Tanai H."/>
            <person name="Kimata M."/>
            <person name="Watanabe M."/>
            <person name="Hiraoka S."/>
            <person name="Chiba Y."/>
            <person name="Ishida S."/>
            <person name="Ono Y."/>
            <person name="Takiguchi S."/>
            <person name="Watanabe S."/>
            <person name="Yosida M."/>
            <person name="Hotuta T."/>
            <person name="Kusano J."/>
            <person name="Kanehori K."/>
            <person name="Takahashi-Fujii A."/>
            <person name="Hara H."/>
            <person name="Tanase T.-O."/>
            <person name="Nomura Y."/>
            <person name="Togiya S."/>
            <person name="Komai F."/>
            <person name="Hara R."/>
            <person name="Takeuchi K."/>
            <person name="Arita M."/>
            <person name="Imose N."/>
            <person name="Musashino K."/>
            <person name="Yuuki H."/>
            <person name="Oshima A."/>
            <person name="Sasaki N."/>
            <person name="Aotsuka S."/>
            <person name="Yoshikawa Y."/>
            <person name="Matsunawa H."/>
            <person name="Ichihara T."/>
            <person name="Shiohata N."/>
            <person name="Sano S."/>
            <person name="Moriya S."/>
            <person name="Momiyama H."/>
            <person name="Satoh N."/>
            <person name="Takami S."/>
            <person name="Terashima Y."/>
            <person name="Suzuki O."/>
            <person name="Nakagawa S."/>
            <person name="Senoh A."/>
            <person name="Mizoguchi H."/>
            <person name="Goto Y."/>
            <person name="Shimizu F."/>
            <person name="Wakebe H."/>
            <person name="Hishigaki H."/>
            <person name="Watanabe T."/>
            <person name="Sugiyama A."/>
            <person name="Takemoto M."/>
            <person name="Kawakami B."/>
            <person name="Yamazaki M."/>
            <person name="Watanabe K."/>
            <person name="Kumagai A."/>
            <person name="Itakura S."/>
            <person name="Fukuzumi Y."/>
            <person name="Fujimori Y."/>
            <person name="Komiyama M."/>
            <person name="Tashiro H."/>
            <person name="Tanigami A."/>
            <person name="Fujiwara T."/>
            <person name="Ono T."/>
            <person name="Yamada K."/>
            <person name="Fujii Y."/>
            <person name="Ozaki K."/>
            <person name="Hirao M."/>
            <person name="Ohmori Y."/>
            <person name="Kawabata A."/>
            <person name="Hikiji T."/>
            <person name="Kobatake N."/>
            <person name="Inagaki H."/>
            <person name="Ikema Y."/>
            <person name="Okamoto S."/>
            <person name="Okitani R."/>
            <person name="Kawakami T."/>
            <person name="Noguchi S."/>
            <person name="Itoh T."/>
            <person name="Shigeta K."/>
            <person name="Senba T."/>
            <person name="Matsumura K."/>
            <person name="Nakajima Y."/>
            <person name="Mizuno T."/>
            <person name="Morinaga M."/>
            <person name="Sasaki M."/>
            <person name="Togashi T."/>
            <person name="Oyama M."/>
            <person name="Hata H."/>
            <person name="Watanabe M."/>
            <person name="Komatsu T."/>
            <person name="Mizushima-Sugano J."/>
            <person name="Satoh T."/>
            <person name="Shirai Y."/>
            <person name="Takahashi Y."/>
            <person name="Nakagawa K."/>
            <person name="Okumura K."/>
            <person name="Nagase T."/>
            <person name="Nomura N."/>
            <person name="Kikuchi H."/>
            <person name="Masuho Y."/>
            <person name="Yamashita R."/>
            <person name="Nakai K."/>
            <person name="Yada T."/>
            <person name="Nakamura Y."/>
            <person name="Ohara O."/>
            <person name="Isogai T."/>
            <person name="Sugano S."/>
        </authorList>
    </citation>
    <scope>NUCLEOTIDE SEQUENCE [LARGE SCALE MRNA] OF 510-1076</scope>
    <source>
        <tissue>Brain</tissue>
    </source>
</reference>
<reference key="5">
    <citation type="journal article" date="2006" name="Nat. Biotechnol.">
        <title>A probability-based approach for high-throughput protein phosphorylation analysis and site localization.</title>
        <authorList>
            <person name="Beausoleil S.A."/>
            <person name="Villen J."/>
            <person name="Gerber S.A."/>
            <person name="Rush J."/>
            <person name="Gygi S.P."/>
        </authorList>
    </citation>
    <scope>PHOSPHORYLATION [LARGE SCALE ANALYSIS] AT SER-1028</scope>
    <scope>IDENTIFICATION BY MASS SPECTROMETRY [LARGE SCALE ANALYSIS]</scope>
    <source>
        <tissue>Cervix carcinoma</tissue>
    </source>
</reference>
<reference key="6">
    <citation type="journal article" date="2008" name="Biochemistry">
        <title>Protein phosphatase 6 regulatory subunits composed of ankyrin repeat domains.</title>
        <authorList>
            <person name="Stefansson B."/>
            <person name="Ohama T."/>
            <person name="Daugherty A.E."/>
            <person name="Brautigan D.L."/>
        </authorList>
    </citation>
    <scope>INTERACTION WITH PPP6R1</scope>
</reference>
<reference key="7">
    <citation type="journal article" date="2008" name="Proc. Natl. Acad. Sci. U.S.A.">
        <title>A quantitative atlas of mitotic phosphorylation.</title>
        <authorList>
            <person name="Dephoure N."/>
            <person name="Zhou C."/>
            <person name="Villen J."/>
            <person name="Beausoleil S.A."/>
            <person name="Bakalarski C.E."/>
            <person name="Elledge S.J."/>
            <person name="Gygi S.P."/>
        </authorList>
    </citation>
    <scope>IDENTIFICATION BY MASS SPECTROMETRY [LARGE SCALE ANALYSIS]</scope>
    <source>
        <tissue>Cervix carcinoma</tissue>
    </source>
</reference>
<reference key="8">
    <citation type="journal article" date="2009" name="Anal. Chem.">
        <title>Lys-N and trypsin cover complementary parts of the phosphoproteome in a refined SCX-based approach.</title>
        <authorList>
            <person name="Gauci S."/>
            <person name="Helbig A.O."/>
            <person name="Slijper M."/>
            <person name="Krijgsveld J."/>
            <person name="Heck A.J."/>
            <person name="Mohammed S."/>
        </authorList>
    </citation>
    <scope>IDENTIFICATION BY MASS SPECTROMETRY [LARGE SCALE ANALYSIS]</scope>
</reference>
<reference key="9">
    <citation type="journal article" date="2010" name="Sci. Signal.">
        <title>Quantitative phosphoproteomics reveals widespread full phosphorylation site occupancy during mitosis.</title>
        <authorList>
            <person name="Olsen J.V."/>
            <person name="Vermeulen M."/>
            <person name="Santamaria A."/>
            <person name="Kumar C."/>
            <person name="Miller M.L."/>
            <person name="Jensen L.J."/>
            <person name="Gnad F."/>
            <person name="Cox J."/>
            <person name="Jensen T.S."/>
            <person name="Nigg E.A."/>
            <person name="Brunak S."/>
            <person name="Mann M."/>
        </authorList>
    </citation>
    <scope>PHOSPHORYLATION [LARGE SCALE ANALYSIS] AT SER-1028</scope>
    <scope>IDENTIFICATION BY MASS SPECTROMETRY [LARGE SCALE ANALYSIS]</scope>
    <source>
        <tissue>Cervix carcinoma</tissue>
    </source>
</reference>
<reference key="10">
    <citation type="journal article" date="2013" name="J. Proteome Res.">
        <title>Toward a comprehensive characterization of a human cancer cell phosphoproteome.</title>
        <authorList>
            <person name="Zhou H."/>
            <person name="Di Palma S."/>
            <person name="Preisinger C."/>
            <person name="Peng M."/>
            <person name="Polat A.N."/>
            <person name="Heck A.J."/>
            <person name="Mohammed S."/>
        </authorList>
    </citation>
    <scope>PHOSPHORYLATION [LARGE SCALE ANALYSIS] AT SER-1028</scope>
    <scope>IDENTIFICATION BY MASS SPECTROMETRY [LARGE SCALE ANALYSIS]</scope>
    <source>
        <tissue>Cervix carcinoma</tissue>
        <tissue>Erythroleukemia</tissue>
    </source>
</reference>
<gene>
    <name type="primary">ANKRD52</name>
</gene>
<organism>
    <name type="scientific">Homo sapiens</name>
    <name type="common">Human</name>
    <dbReference type="NCBI Taxonomy" id="9606"/>
    <lineage>
        <taxon>Eukaryota</taxon>
        <taxon>Metazoa</taxon>
        <taxon>Chordata</taxon>
        <taxon>Craniata</taxon>
        <taxon>Vertebrata</taxon>
        <taxon>Euteleostomi</taxon>
        <taxon>Mammalia</taxon>
        <taxon>Eutheria</taxon>
        <taxon>Euarchontoglires</taxon>
        <taxon>Primates</taxon>
        <taxon>Haplorrhini</taxon>
        <taxon>Catarrhini</taxon>
        <taxon>Hominidae</taxon>
        <taxon>Homo</taxon>
    </lineage>
</organism>
<dbReference type="EMBL" id="AB190990">
    <property type="protein sequence ID" value="BAG16262.1"/>
    <property type="molecule type" value="mRNA"/>
</dbReference>
<dbReference type="EMBL" id="AC073896">
    <property type="status" value="NOT_ANNOTATED_CDS"/>
    <property type="molecule type" value="Genomic_DNA"/>
</dbReference>
<dbReference type="EMBL" id="CH471054">
    <property type="protein sequence ID" value="EAW96919.1"/>
    <property type="molecule type" value="Genomic_DNA"/>
</dbReference>
<dbReference type="EMBL" id="AK091555">
    <property type="status" value="NOT_ANNOTATED_CDS"/>
    <property type="molecule type" value="mRNA"/>
</dbReference>
<dbReference type="CCDS" id="CCDS44920.1"/>
<dbReference type="RefSeq" id="NP_775866.2">
    <property type="nucleotide sequence ID" value="NM_173595.3"/>
</dbReference>
<dbReference type="SMR" id="Q8NB46"/>
<dbReference type="BioGRID" id="129540">
    <property type="interactions" value="96"/>
</dbReference>
<dbReference type="CORUM" id="Q8NB46"/>
<dbReference type="FunCoup" id="Q8NB46">
    <property type="interactions" value="2013"/>
</dbReference>
<dbReference type="IntAct" id="Q8NB46">
    <property type="interactions" value="56"/>
</dbReference>
<dbReference type="MINT" id="Q8NB46"/>
<dbReference type="STRING" id="9606.ENSP00000267116"/>
<dbReference type="ChEMBL" id="CHEMBL4105922"/>
<dbReference type="GlyGen" id="Q8NB46">
    <property type="glycosylation" value="1 site, 1 O-linked glycan (1 site)"/>
</dbReference>
<dbReference type="iPTMnet" id="Q8NB46"/>
<dbReference type="PhosphoSitePlus" id="Q8NB46"/>
<dbReference type="BioMuta" id="ANKRD52"/>
<dbReference type="DMDM" id="296439443"/>
<dbReference type="jPOST" id="Q8NB46"/>
<dbReference type="MassIVE" id="Q8NB46"/>
<dbReference type="PaxDb" id="9606-ENSP00000267116"/>
<dbReference type="PeptideAtlas" id="Q8NB46"/>
<dbReference type="ProteomicsDB" id="72730"/>
<dbReference type="Pumba" id="Q8NB46"/>
<dbReference type="Antibodypedia" id="50743">
    <property type="antibodies" value="94 antibodies from 20 providers"/>
</dbReference>
<dbReference type="DNASU" id="283373"/>
<dbReference type="Ensembl" id="ENST00000267116.8">
    <property type="protein sequence ID" value="ENSP00000267116.7"/>
    <property type="gene ID" value="ENSG00000139645.11"/>
</dbReference>
<dbReference type="GeneID" id="283373"/>
<dbReference type="KEGG" id="hsa:283373"/>
<dbReference type="MANE-Select" id="ENST00000267116.8">
    <property type="protein sequence ID" value="ENSP00000267116.7"/>
    <property type="RefSeq nucleotide sequence ID" value="NM_173595.4"/>
    <property type="RefSeq protein sequence ID" value="NP_775866.2"/>
</dbReference>
<dbReference type="UCSC" id="uc001skm.5">
    <property type="organism name" value="human"/>
</dbReference>
<dbReference type="AGR" id="HGNC:26614"/>
<dbReference type="CTD" id="283373"/>
<dbReference type="DisGeNET" id="283373"/>
<dbReference type="GeneCards" id="ANKRD52"/>
<dbReference type="HGNC" id="HGNC:26614">
    <property type="gene designation" value="ANKRD52"/>
</dbReference>
<dbReference type="HPA" id="ENSG00000139645">
    <property type="expression patterns" value="Low tissue specificity"/>
</dbReference>
<dbReference type="MIM" id="620862">
    <property type="type" value="gene"/>
</dbReference>
<dbReference type="neXtProt" id="NX_Q8NB46"/>
<dbReference type="OpenTargets" id="ENSG00000139645"/>
<dbReference type="PharmGKB" id="PA143485302"/>
<dbReference type="VEuPathDB" id="HostDB:ENSG00000139645"/>
<dbReference type="eggNOG" id="KOG0504">
    <property type="taxonomic scope" value="Eukaryota"/>
</dbReference>
<dbReference type="GeneTree" id="ENSGT00950000182908"/>
<dbReference type="HOGENOM" id="CLU_000134_58_0_1"/>
<dbReference type="InParanoid" id="Q8NB46"/>
<dbReference type="OMA" id="VKNNDQW"/>
<dbReference type="OrthoDB" id="7464126at2759"/>
<dbReference type="PAN-GO" id="Q8NB46">
    <property type="GO annotations" value="0 GO annotations based on evolutionary models"/>
</dbReference>
<dbReference type="PhylomeDB" id="Q8NB46"/>
<dbReference type="TreeFam" id="TF312824"/>
<dbReference type="PathwayCommons" id="Q8NB46"/>
<dbReference type="SignaLink" id="Q8NB46"/>
<dbReference type="BioGRID-ORCS" id="283373">
    <property type="hits" value="116 hits in 1155 CRISPR screens"/>
</dbReference>
<dbReference type="CD-CODE" id="FBBE2A73">
    <property type="entry name" value="Synthetic Condensate 000275"/>
</dbReference>
<dbReference type="ChiTaRS" id="ANKRD52">
    <property type="organism name" value="human"/>
</dbReference>
<dbReference type="GenomeRNAi" id="283373"/>
<dbReference type="Pharos" id="Q8NB46">
    <property type="development level" value="Tbio"/>
</dbReference>
<dbReference type="PRO" id="PR:Q8NB46"/>
<dbReference type="Proteomes" id="UP000005640">
    <property type="component" value="Chromosome 12"/>
</dbReference>
<dbReference type="RNAct" id="Q8NB46">
    <property type="molecule type" value="protein"/>
</dbReference>
<dbReference type="Bgee" id="ENSG00000139645">
    <property type="expression patterns" value="Expressed in stromal cell of endometrium and 132 other cell types or tissues"/>
</dbReference>
<dbReference type="Gene3D" id="1.25.40.20">
    <property type="entry name" value="Ankyrin repeat-containing domain"/>
    <property type="match status" value="8"/>
</dbReference>
<dbReference type="InterPro" id="IPR002110">
    <property type="entry name" value="Ankyrin_rpt"/>
</dbReference>
<dbReference type="InterPro" id="IPR036770">
    <property type="entry name" value="Ankyrin_rpt-contain_sf"/>
</dbReference>
<dbReference type="InterPro" id="IPR050889">
    <property type="entry name" value="Dendritic_Spine_Reg/Scaffold"/>
</dbReference>
<dbReference type="PANTHER" id="PTHR24166:SF52">
    <property type="entry name" value="ANKYRIN REPEAT DOMAIN-CONTAINING PROTEIN 65"/>
    <property type="match status" value="1"/>
</dbReference>
<dbReference type="PANTHER" id="PTHR24166">
    <property type="entry name" value="ROLLING PEBBLES, ISOFORM B"/>
    <property type="match status" value="1"/>
</dbReference>
<dbReference type="Pfam" id="PF00023">
    <property type="entry name" value="Ank"/>
    <property type="match status" value="2"/>
</dbReference>
<dbReference type="Pfam" id="PF12796">
    <property type="entry name" value="Ank_2"/>
    <property type="match status" value="8"/>
</dbReference>
<dbReference type="Pfam" id="PF13637">
    <property type="entry name" value="Ank_4"/>
    <property type="match status" value="3"/>
</dbReference>
<dbReference type="PRINTS" id="PR01415">
    <property type="entry name" value="ANKYRIN"/>
</dbReference>
<dbReference type="SMART" id="SM00248">
    <property type="entry name" value="ANK"/>
    <property type="match status" value="28"/>
</dbReference>
<dbReference type="SUPFAM" id="SSF48403">
    <property type="entry name" value="Ankyrin repeat"/>
    <property type="match status" value="3"/>
</dbReference>
<dbReference type="PROSITE" id="PS50297">
    <property type="entry name" value="ANK_REP_REGION"/>
    <property type="match status" value="1"/>
</dbReference>
<dbReference type="PROSITE" id="PS50088">
    <property type="entry name" value="ANK_REPEAT"/>
    <property type="match status" value="21"/>
</dbReference>